<reference key="1">
    <citation type="journal article" date="2005" name="Nature">
        <title>The genome of the social amoeba Dictyostelium discoideum.</title>
        <authorList>
            <person name="Eichinger L."/>
            <person name="Pachebat J.A."/>
            <person name="Gloeckner G."/>
            <person name="Rajandream M.A."/>
            <person name="Sucgang R."/>
            <person name="Berriman M."/>
            <person name="Song J."/>
            <person name="Olsen R."/>
            <person name="Szafranski K."/>
            <person name="Xu Q."/>
            <person name="Tunggal B."/>
            <person name="Kummerfeld S."/>
            <person name="Madera M."/>
            <person name="Konfortov B.A."/>
            <person name="Rivero F."/>
            <person name="Bankier A.T."/>
            <person name="Lehmann R."/>
            <person name="Hamlin N."/>
            <person name="Davies R."/>
            <person name="Gaudet P."/>
            <person name="Fey P."/>
            <person name="Pilcher K."/>
            <person name="Chen G."/>
            <person name="Saunders D."/>
            <person name="Sodergren E.J."/>
            <person name="Davis P."/>
            <person name="Kerhornou A."/>
            <person name="Nie X."/>
            <person name="Hall N."/>
            <person name="Anjard C."/>
            <person name="Hemphill L."/>
            <person name="Bason N."/>
            <person name="Farbrother P."/>
            <person name="Desany B."/>
            <person name="Just E."/>
            <person name="Morio T."/>
            <person name="Rost R."/>
            <person name="Churcher C.M."/>
            <person name="Cooper J."/>
            <person name="Haydock S."/>
            <person name="van Driessche N."/>
            <person name="Cronin A."/>
            <person name="Goodhead I."/>
            <person name="Muzny D.M."/>
            <person name="Mourier T."/>
            <person name="Pain A."/>
            <person name="Lu M."/>
            <person name="Harper D."/>
            <person name="Lindsay R."/>
            <person name="Hauser H."/>
            <person name="James K.D."/>
            <person name="Quiles M."/>
            <person name="Madan Babu M."/>
            <person name="Saito T."/>
            <person name="Buchrieser C."/>
            <person name="Wardroper A."/>
            <person name="Felder M."/>
            <person name="Thangavelu M."/>
            <person name="Johnson D."/>
            <person name="Knights A."/>
            <person name="Loulseged H."/>
            <person name="Mungall K.L."/>
            <person name="Oliver K."/>
            <person name="Price C."/>
            <person name="Quail M.A."/>
            <person name="Urushihara H."/>
            <person name="Hernandez J."/>
            <person name="Rabbinowitsch E."/>
            <person name="Steffen D."/>
            <person name="Sanders M."/>
            <person name="Ma J."/>
            <person name="Kohara Y."/>
            <person name="Sharp S."/>
            <person name="Simmonds M.N."/>
            <person name="Spiegler S."/>
            <person name="Tivey A."/>
            <person name="Sugano S."/>
            <person name="White B."/>
            <person name="Walker D."/>
            <person name="Woodward J.R."/>
            <person name="Winckler T."/>
            <person name="Tanaka Y."/>
            <person name="Shaulsky G."/>
            <person name="Schleicher M."/>
            <person name="Weinstock G.M."/>
            <person name="Rosenthal A."/>
            <person name="Cox E.C."/>
            <person name="Chisholm R.L."/>
            <person name="Gibbs R.A."/>
            <person name="Loomis W.F."/>
            <person name="Platzer M."/>
            <person name="Kay R.R."/>
            <person name="Williams J.G."/>
            <person name="Dear P.H."/>
            <person name="Noegel A.A."/>
            <person name="Barrell B.G."/>
            <person name="Kuspa A."/>
        </authorList>
    </citation>
    <scope>NUCLEOTIDE SEQUENCE [LARGE SCALE GENOMIC DNA]</scope>
    <source>
        <strain>AX4</strain>
    </source>
</reference>
<feature type="chain" id="PRO_0000318822" description="Probable cytochrome P450 514A4">
    <location>
        <begin position="1"/>
        <end position="502"/>
    </location>
</feature>
<feature type="transmembrane region" description="Helical" evidence="2">
    <location>
        <begin position="4"/>
        <end position="24"/>
    </location>
</feature>
<feature type="binding site" description="axial binding residue" evidence="1">
    <location>
        <position position="448"/>
    </location>
    <ligand>
        <name>heme</name>
        <dbReference type="ChEBI" id="CHEBI:30413"/>
    </ligand>
    <ligandPart>
        <name>Fe</name>
        <dbReference type="ChEBI" id="CHEBI:18248"/>
    </ligandPart>
</feature>
<evidence type="ECO:0000250" key="1"/>
<evidence type="ECO:0000255" key="2"/>
<evidence type="ECO:0000305" key="3"/>
<dbReference type="EC" id="1.14.-.-"/>
<dbReference type="EMBL" id="AAFI02000167">
    <property type="protein sequence ID" value="EAL62088.1"/>
    <property type="molecule type" value="Genomic_DNA"/>
</dbReference>
<dbReference type="RefSeq" id="XP_635592.1">
    <property type="nucleotide sequence ID" value="XM_630500.1"/>
</dbReference>
<dbReference type="SMR" id="Q54FP9"/>
<dbReference type="STRING" id="44689.Q54FP9"/>
<dbReference type="PaxDb" id="44689-DDB0232979"/>
<dbReference type="EnsemblProtists" id="EAL62088">
    <property type="protein sequence ID" value="EAL62088"/>
    <property type="gene ID" value="DDB_G0290707"/>
</dbReference>
<dbReference type="GeneID" id="8627789"/>
<dbReference type="KEGG" id="ddi:DDB_G0290707"/>
<dbReference type="dictyBase" id="DDB_G0290707">
    <property type="gene designation" value="cyp514A4"/>
</dbReference>
<dbReference type="VEuPathDB" id="AmoebaDB:DDB_G0290707"/>
<dbReference type="eggNOG" id="KOG0156">
    <property type="taxonomic scope" value="Eukaryota"/>
</dbReference>
<dbReference type="HOGENOM" id="CLU_001570_22_0_1"/>
<dbReference type="InParanoid" id="Q54FP9"/>
<dbReference type="OMA" id="SLAFCNW"/>
<dbReference type="PhylomeDB" id="Q54FP9"/>
<dbReference type="PRO" id="PR:Q54FP9"/>
<dbReference type="Proteomes" id="UP000002195">
    <property type="component" value="Chromosome 5"/>
</dbReference>
<dbReference type="GO" id="GO:0016020">
    <property type="term" value="C:membrane"/>
    <property type="evidence" value="ECO:0007669"/>
    <property type="project" value="UniProtKB-SubCell"/>
</dbReference>
<dbReference type="GO" id="GO:0020037">
    <property type="term" value="F:heme binding"/>
    <property type="evidence" value="ECO:0007669"/>
    <property type="project" value="InterPro"/>
</dbReference>
<dbReference type="GO" id="GO:0005506">
    <property type="term" value="F:iron ion binding"/>
    <property type="evidence" value="ECO:0007669"/>
    <property type="project" value="InterPro"/>
</dbReference>
<dbReference type="GO" id="GO:0004497">
    <property type="term" value="F:monooxygenase activity"/>
    <property type="evidence" value="ECO:0007669"/>
    <property type="project" value="UniProtKB-KW"/>
</dbReference>
<dbReference type="GO" id="GO:0016705">
    <property type="term" value="F:oxidoreductase activity, acting on paired donors, with incorporation or reduction of molecular oxygen"/>
    <property type="evidence" value="ECO:0007669"/>
    <property type="project" value="InterPro"/>
</dbReference>
<dbReference type="CDD" id="cd20617">
    <property type="entry name" value="CYP1_2-like"/>
    <property type="match status" value="1"/>
</dbReference>
<dbReference type="Gene3D" id="1.10.630.10">
    <property type="entry name" value="Cytochrome P450"/>
    <property type="match status" value="1"/>
</dbReference>
<dbReference type="InterPro" id="IPR001128">
    <property type="entry name" value="Cyt_P450"/>
</dbReference>
<dbReference type="InterPro" id="IPR017972">
    <property type="entry name" value="Cyt_P450_CS"/>
</dbReference>
<dbReference type="InterPro" id="IPR002401">
    <property type="entry name" value="Cyt_P450_E_grp-I"/>
</dbReference>
<dbReference type="InterPro" id="IPR036396">
    <property type="entry name" value="Cyt_P450_sf"/>
</dbReference>
<dbReference type="PANTHER" id="PTHR24303:SF37">
    <property type="entry name" value="CYTOCHROME P450 514A1-RELATED"/>
    <property type="match status" value="1"/>
</dbReference>
<dbReference type="PANTHER" id="PTHR24303">
    <property type="entry name" value="HEME-BINDING MONOOXYGENASE FAMILY"/>
    <property type="match status" value="1"/>
</dbReference>
<dbReference type="Pfam" id="PF00067">
    <property type="entry name" value="p450"/>
    <property type="match status" value="1"/>
</dbReference>
<dbReference type="PRINTS" id="PR00463">
    <property type="entry name" value="EP450I"/>
</dbReference>
<dbReference type="SUPFAM" id="SSF48264">
    <property type="entry name" value="Cytochrome P450"/>
    <property type="match status" value="1"/>
</dbReference>
<dbReference type="PROSITE" id="PS00086">
    <property type="entry name" value="CYTOCHROME_P450"/>
    <property type="match status" value="1"/>
</dbReference>
<sequence>MNTIFTIILTITILVLSLILKDLLFEGRIKKINKLIPGPSTIPVFGNLLQINAKDFPKSVNDFYERYGKVFRLRLGSVEIVVLTGPEVIDECFNKKHREIFKERYIKFSRFLGKDYNIFSSNGDYHYVLRGILTSEITTRKLNNGRLESNKFILEMFSNLCKDNKETLVKNTPNQIRILAVKLILNFTLGIEENDETILIIVEKIKCIFEAAGLLIYSDYLPFLFPLDIKSMSKNDIISSYFFIKDFIGIKLDAIKIKYEKENELKNETTDETSSKLNNIPIIENYYKNYLDGSIHYDSILFSISDIIFAAVDSTSNGFSLLIGQLINKPEIQDKIYEEIMRNDENNNTNNISFADHTKYPYIISVMNESYRYNSSVPITEPNKTTEDVEVNGYKIAKGTMIIKNLRGTHLSKEFWGEDALEFKPERFKNQPLNQKGLFHFGAGARACPGGRFTESFTFTFLVIMLKNFKIVNPTDIPIDVEGEVGLAMQCKPFDALFIKRN</sequence>
<proteinExistence type="inferred from homology"/>
<organism>
    <name type="scientific">Dictyostelium discoideum</name>
    <name type="common">Social amoeba</name>
    <dbReference type="NCBI Taxonomy" id="44689"/>
    <lineage>
        <taxon>Eukaryota</taxon>
        <taxon>Amoebozoa</taxon>
        <taxon>Evosea</taxon>
        <taxon>Eumycetozoa</taxon>
        <taxon>Dictyostelia</taxon>
        <taxon>Dictyosteliales</taxon>
        <taxon>Dictyosteliaceae</taxon>
        <taxon>Dictyostelium</taxon>
    </lineage>
</organism>
<name>C5144_DICDI</name>
<protein>
    <recommendedName>
        <fullName>Probable cytochrome P450 514A4</fullName>
        <ecNumber>1.14.-.-</ecNumber>
    </recommendedName>
</protein>
<accession>Q54FP9</accession>
<comment type="cofactor">
    <cofactor evidence="1">
        <name>heme</name>
        <dbReference type="ChEBI" id="CHEBI:30413"/>
    </cofactor>
</comment>
<comment type="subcellular location">
    <subcellularLocation>
        <location evidence="3">Membrane</location>
        <topology evidence="3">Single-pass membrane protein</topology>
    </subcellularLocation>
</comment>
<comment type="similarity">
    <text evidence="3">Belongs to the cytochrome P450 family.</text>
</comment>
<gene>
    <name type="primary">cyp514A4</name>
    <name type="ORF">DDB_G0290707</name>
</gene>
<keyword id="KW-0349">Heme</keyword>
<keyword id="KW-0408">Iron</keyword>
<keyword id="KW-0472">Membrane</keyword>
<keyword id="KW-0479">Metal-binding</keyword>
<keyword id="KW-0503">Monooxygenase</keyword>
<keyword id="KW-0560">Oxidoreductase</keyword>
<keyword id="KW-1185">Reference proteome</keyword>
<keyword id="KW-0812">Transmembrane</keyword>
<keyword id="KW-1133">Transmembrane helix</keyword>